<evidence type="ECO:0000255" key="1">
    <source>
        <dbReference type="HAMAP-Rule" id="MF_00131"/>
    </source>
</evidence>
<feature type="chain" id="PRO_1000117731" description="Tryptophan synthase alpha chain">
    <location>
        <begin position="1"/>
        <end position="258"/>
    </location>
</feature>
<feature type="active site" description="Proton acceptor" evidence="1">
    <location>
        <position position="47"/>
    </location>
</feature>
<feature type="active site" description="Proton acceptor" evidence="1">
    <location>
        <position position="58"/>
    </location>
</feature>
<proteinExistence type="inferred from homology"/>
<reference key="1">
    <citation type="submission" date="2008-10" db="EMBL/GenBank/DDBJ databases">
        <title>Genome sequence of Bacillus cereus B4264.</title>
        <authorList>
            <person name="Dodson R.J."/>
            <person name="Durkin A.S."/>
            <person name="Rosovitz M.J."/>
            <person name="Rasko D.A."/>
            <person name="Hoffmaster A."/>
            <person name="Ravel J."/>
            <person name="Sutton G."/>
        </authorList>
    </citation>
    <scope>NUCLEOTIDE SEQUENCE [LARGE SCALE GENOMIC DNA]</scope>
    <source>
        <strain>B4264</strain>
    </source>
</reference>
<name>TRPA_BACC4</name>
<sequence>MGVEKIKAAFENGKKAFIPYVMGGDGGFEKLKERIRFLDEAGASIVEIGIPFSDPVADGPTIQRAGKRALDSGVTVKGIFQALIEVRKEVQIPFVLMTYLNPVLAFGKERFIENCIEAGVDGIIVPDLPYEEQNIIASLLREVNIALIPLVTVTSPIERIEKITSESEGFVYAVTVAGVTGVRQNFKEEIHSYLEKVKSHVNLPVVAGFGISTKEHVEEMVTICDGVVVGSKVIELLENEKREEICELIYATKQKEEA</sequence>
<gene>
    <name evidence="1" type="primary">trpA</name>
    <name type="ordered locus">BCB4264_A1297</name>
</gene>
<keyword id="KW-0028">Amino-acid biosynthesis</keyword>
<keyword id="KW-0057">Aromatic amino acid biosynthesis</keyword>
<keyword id="KW-0456">Lyase</keyword>
<keyword id="KW-0822">Tryptophan biosynthesis</keyword>
<organism>
    <name type="scientific">Bacillus cereus (strain B4264)</name>
    <dbReference type="NCBI Taxonomy" id="405532"/>
    <lineage>
        <taxon>Bacteria</taxon>
        <taxon>Bacillati</taxon>
        <taxon>Bacillota</taxon>
        <taxon>Bacilli</taxon>
        <taxon>Bacillales</taxon>
        <taxon>Bacillaceae</taxon>
        <taxon>Bacillus</taxon>
        <taxon>Bacillus cereus group</taxon>
    </lineage>
</organism>
<dbReference type="EC" id="4.2.1.20" evidence="1"/>
<dbReference type="EMBL" id="CP001176">
    <property type="protein sequence ID" value="ACK63125.1"/>
    <property type="molecule type" value="Genomic_DNA"/>
</dbReference>
<dbReference type="RefSeq" id="WP_000537816.1">
    <property type="nucleotide sequence ID" value="NZ_VEHB01000003.1"/>
</dbReference>
<dbReference type="SMR" id="B7HH02"/>
<dbReference type="KEGG" id="bcb:BCB4264_A1297"/>
<dbReference type="HOGENOM" id="CLU_016734_0_0_9"/>
<dbReference type="UniPathway" id="UPA00035">
    <property type="reaction ID" value="UER00044"/>
</dbReference>
<dbReference type="Proteomes" id="UP000007096">
    <property type="component" value="Chromosome"/>
</dbReference>
<dbReference type="GO" id="GO:0005829">
    <property type="term" value="C:cytosol"/>
    <property type="evidence" value="ECO:0007669"/>
    <property type="project" value="TreeGrafter"/>
</dbReference>
<dbReference type="GO" id="GO:0004834">
    <property type="term" value="F:tryptophan synthase activity"/>
    <property type="evidence" value="ECO:0007669"/>
    <property type="project" value="UniProtKB-UniRule"/>
</dbReference>
<dbReference type="CDD" id="cd04724">
    <property type="entry name" value="Tryptophan_synthase_alpha"/>
    <property type="match status" value="1"/>
</dbReference>
<dbReference type="FunFam" id="3.20.20.70:FF:000037">
    <property type="entry name" value="Tryptophan synthase alpha chain"/>
    <property type="match status" value="1"/>
</dbReference>
<dbReference type="Gene3D" id="3.20.20.70">
    <property type="entry name" value="Aldolase class I"/>
    <property type="match status" value="1"/>
</dbReference>
<dbReference type="HAMAP" id="MF_00131">
    <property type="entry name" value="Trp_synth_alpha"/>
    <property type="match status" value="1"/>
</dbReference>
<dbReference type="InterPro" id="IPR013785">
    <property type="entry name" value="Aldolase_TIM"/>
</dbReference>
<dbReference type="InterPro" id="IPR011060">
    <property type="entry name" value="RibuloseP-bd_barrel"/>
</dbReference>
<dbReference type="InterPro" id="IPR018204">
    <property type="entry name" value="Trp_synthase_alpha_AS"/>
</dbReference>
<dbReference type="InterPro" id="IPR002028">
    <property type="entry name" value="Trp_synthase_suA"/>
</dbReference>
<dbReference type="NCBIfam" id="TIGR00262">
    <property type="entry name" value="trpA"/>
    <property type="match status" value="1"/>
</dbReference>
<dbReference type="PANTHER" id="PTHR43406:SF1">
    <property type="entry name" value="TRYPTOPHAN SYNTHASE ALPHA CHAIN, CHLOROPLASTIC"/>
    <property type="match status" value="1"/>
</dbReference>
<dbReference type="PANTHER" id="PTHR43406">
    <property type="entry name" value="TRYPTOPHAN SYNTHASE, ALPHA CHAIN"/>
    <property type="match status" value="1"/>
</dbReference>
<dbReference type="Pfam" id="PF00290">
    <property type="entry name" value="Trp_syntA"/>
    <property type="match status" value="1"/>
</dbReference>
<dbReference type="SUPFAM" id="SSF51366">
    <property type="entry name" value="Ribulose-phoshate binding barrel"/>
    <property type="match status" value="1"/>
</dbReference>
<dbReference type="PROSITE" id="PS00167">
    <property type="entry name" value="TRP_SYNTHASE_ALPHA"/>
    <property type="match status" value="1"/>
</dbReference>
<protein>
    <recommendedName>
        <fullName evidence="1">Tryptophan synthase alpha chain</fullName>
        <ecNumber evidence="1">4.2.1.20</ecNumber>
    </recommendedName>
</protein>
<comment type="function">
    <text evidence="1">The alpha subunit is responsible for the aldol cleavage of indoleglycerol phosphate to indole and glyceraldehyde 3-phosphate.</text>
</comment>
<comment type="catalytic activity">
    <reaction evidence="1">
        <text>(1S,2R)-1-C-(indol-3-yl)glycerol 3-phosphate + L-serine = D-glyceraldehyde 3-phosphate + L-tryptophan + H2O</text>
        <dbReference type="Rhea" id="RHEA:10532"/>
        <dbReference type="ChEBI" id="CHEBI:15377"/>
        <dbReference type="ChEBI" id="CHEBI:33384"/>
        <dbReference type="ChEBI" id="CHEBI:57912"/>
        <dbReference type="ChEBI" id="CHEBI:58866"/>
        <dbReference type="ChEBI" id="CHEBI:59776"/>
        <dbReference type="EC" id="4.2.1.20"/>
    </reaction>
</comment>
<comment type="pathway">
    <text evidence="1">Amino-acid biosynthesis; L-tryptophan biosynthesis; L-tryptophan from chorismate: step 5/5.</text>
</comment>
<comment type="subunit">
    <text evidence="1">Tetramer of two alpha and two beta chains.</text>
</comment>
<comment type="similarity">
    <text evidence="1">Belongs to the TrpA family.</text>
</comment>
<accession>B7HH02</accession>